<dbReference type="EMBL" id="CP000087">
    <property type="protein sequence ID" value="ABE05430.1"/>
    <property type="status" value="ALT_INIT"/>
    <property type="molecule type" value="Genomic_DNA"/>
</dbReference>
<dbReference type="SMR" id="Q1RGT4"/>
<dbReference type="KEGG" id="rbe:RBE_1349"/>
<dbReference type="eggNOG" id="COG1475">
    <property type="taxonomic scope" value="Bacteria"/>
</dbReference>
<dbReference type="HOGENOM" id="CLU_023853_0_0_5"/>
<dbReference type="Proteomes" id="UP000001951">
    <property type="component" value="Chromosome"/>
</dbReference>
<dbReference type="GO" id="GO:0005694">
    <property type="term" value="C:chromosome"/>
    <property type="evidence" value="ECO:0007669"/>
    <property type="project" value="TreeGrafter"/>
</dbReference>
<dbReference type="GO" id="GO:0003677">
    <property type="term" value="F:DNA binding"/>
    <property type="evidence" value="ECO:0007669"/>
    <property type="project" value="UniProtKB-KW"/>
</dbReference>
<dbReference type="GO" id="GO:0007059">
    <property type="term" value="P:chromosome segregation"/>
    <property type="evidence" value="ECO:0007669"/>
    <property type="project" value="UniProtKB-KW"/>
</dbReference>
<dbReference type="GO" id="GO:0045881">
    <property type="term" value="P:positive regulation of sporulation resulting in formation of a cellular spore"/>
    <property type="evidence" value="ECO:0007669"/>
    <property type="project" value="TreeGrafter"/>
</dbReference>
<dbReference type="CDD" id="cd16393">
    <property type="entry name" value="SPO0J_N"/>
    <property type="match status" value="1"/>
</dbReference>
<dbReference type="FunFam" id="1.10.10.2830:FF:000001">
    <property type="entry name" value="Chromosome partitioning protein ParB"/>
    <property type="match status" value="1"/>
</dbReference>
<dbReference type="FunFam" id="3.90.1530.30:FF:000001">
    <property type="entry name" value="Chromosome partitioning protein ParB"/>
    <property type="match status" value="1"/>
</dbReference>
<dbReference type="Gene3D" id="1.10.10.2830">
    <property type="match status" value="1"/>
</dbReference>
<dbReference type="Gene3D" id="3.90.1530.30">
    <property type="match status" value="1"/>
</dbReference>
<dbReference type="InterPro" id="IPR050336">
    <property type="entry name" value="Chromosome_partition/occlusion"/>
</dbReference>
<dbReference type="InterPro" id="IPR041468">
    <property type="entry name" value="HTH_ParB/Spo0J"/>
</dbReference>
<dbReference type="InterPro" id="IPR004437">
    <property type="entry name" value="ParB/RepB/Spo0J"/>
</dbReference>
<dbReference type="InterPro" id="IPR003115">
    <property type="entry name" value="ParB/Sulfiredoxin_dom"/>
</dbReference>
<dbReference type="InterPro" id="IPR036086">
    <property type="entry name" value="ParB/Sulfiredoxin_sf"/>
</dbReference>
<dbReference type="InterPro" id="IPR057240">
    <property type="entry name" value="ParB_dimer_C"/>
</dbReference>
<dbReference type="NCBIfam" id="TIGR00180">
    <property type="entry name" value="parB_part"/>
    <property type="match status" value="1"/>
</dbReference>
<dbReference type="PANTHER" id="PTHR33375">
    <property type="entry name" value="CHROMOSOME-PARTITIONING PROTEIN PARB-RELATED"/>
    <property type="match status" value="1"/>
</dbReference>
<dbReference type="PANTHER" id="PTHR33375:SF1">
    <property type="entry name" value="CHROMOSOME-PARTITIONING PROTEIN PARB-RELATED"/>
    <property type="match status" value="1"/>
</dbReference>
<dbReference type="Pfam" id="PF17762">
    <property type="entry name" value="HTH_ParB"/>
    <property type="match status" value="1"/>
</dbReference>
<dbReference type="Pfam" id="PF23552">
    <property type="entry name" value="ParB_dimer"/>
    <property type="match status" value="1"/>
</dbReference>
<dbReference type="Pfam" id="PF02195">
    <property type="entry name" value="ParBc"/>
    <property type="match status" value="1"/>
</dbReference>
<dbReference type="SMART" id="SM00470">
    <property type="entry name" value="ParB"/>
    <property type="match status" value="1"/>
</dbReference>
<dbReference type="SUPFAM" id="SSF109709">
    <property type="entry name" value="KorB DNA-binding domain-like"/>
    <property type="match status" value="1"/>
</dbReference>
<dbReference type="SUPFAM" id="SSF110849">
    <property type="entry name" value="ParB/Sulfiredoxin"/>
    <property type="match status" value="1"/>
</dbReference>
<keyword id="KW-0159">Chromosome partition</keyword>
<keyword id="KW-0238">DNA-binding</keyword>
<name>PARB_RICBR</name>
<feature type="chain" id="PRO_0000291836" description="Probable chromosome-partitioning protein ParB">
    <location>
        <begin position="1"/>
        <end position="287"/>
    </location>
</feature>
<reference key="1">
    <citation type="journal article" date="2006" name="PLoS Genet.">
        <title>Genome sequence of Rickettsia bellii illuminates the role of amoebae in gene exchanges between intracellular pathogens.</title>
        <authorList>
            <person name="Ogata H."/>
            <person name="La Scola B."/>
            <person name="Audic S."/>
            <person name="Renesto P."/>
            <person name="Blanc G."/>
            <person name="Robert C."/>
            <person name="Fournier P.-E."/>
            <person name="Claverie J.-M."/>
            <person name="Raoult D."/>
        </authorList>
    </citation>
    <scope>NUCLEOTIDE SEQUENCE [LARGE SCALE GENOMIC DNA]</scope>
    <source>
        <strain>RML369-C</strain>
    </source>
</reference>
<accession>Q1RGT4</accession>
<protein>
    <recommendedName>
        <fullName>Probable chromosome-partitioning protein ParB</fullName>
    </recommendedName>
</protein>
<gene>
    <name type="primary">parB</name>
    <name type="ordered locus">RBE_1349</name>
</gene>
<sequence>MKNKGLGRGLSSLLGEEVISTEKESLEIVQIINIDRIKPNENQPRKHFEYDKIKELSDSILNNGLLQPIIIDNSFQIIAGERRWRACKLAKISEIPVIIKNLDAKESMEIALIENIQRSDLTVMEEARGFKYLVENFNYTAEKLAERLGKSRSHIANLLRLNNLPQSIQNKLDENTLSMGHARCLINHEHAEIIANYVIDNDLNVRQTEELVRQWSQNEYTKYPDNNRIGKQLFKEKTEDNDLQSLVKILSEKFNIKVTIENYSLGGKLIFHYKDLKELDKILLELS</sequence>
<comment type="function">
    <text evidence="1">Involved in chromosome partition. Localize to both poles of the predivisional cell following completion of DNA replication. Binds to the DNA origin of replication (By similarity).</text>
</comment>
<comment type="similarity">
    <text evidence="2">Belongs to the ParB family.</text>
</comment>
<comment type="sequence caution" evidence="2">
    <conflict type="erroneous initiation">
        <sequence resource="EMBL-CDS" id="ABE05430"/>
    </conflict>
</comment>
<proteinExistence type="inferred from homology"/>
<organism>
    <name type="scientific">Rickettsia bellii (strain RML369-C)</name>
    <dbReference type="NCBI Taxonomy" id="336407"/>
    <lineage>
        <taxon>Bacteria</taxon>
        <taxon>Pseudomonadati</taxon>
        <taxon>Pseudomonadota</taxon>
        <taxon>Alphaproteobacteria</taxon>
        <taxon>Rickettsiales</taxon>
        <taxon>Rickettsiaceae</taxon>
        <taxon>Rickettsieae</taxon>
        <taxon>Rickettsia</taxon>
        <taxon>belli group</taxon>
    </lineage>
</organism>
<evidence type="ECO:0000250" key="1"/>
<evidence type="ECO:0000305" key="2"/>